<feature type="chain" id="PRO_0000195806" description="Xylose isomerase">
    <location>
        <begin position="1"/>
        <end position="9" status="greater than"/>
    </location>
</feature>
<feature type="non-terminal residue">
    <location>
        <position position="9"/>
    </location>
</feature>
<proteinExistence type="evidence at protein level"/>
<evidence type="ECO:0000305" key="1"/>
<reference key="1">
    <citation type="journal article" date="1988" name="Biochem. Biophys. Res. Commun.">
        <title>Purification and characterisation of glucose (xylose) isomerase from Chainia sp. (NCL 82-5-1).</title>
        <authorList>
            <person name="Pawar H.S."/>
            <person name="Kannan K."/>
            <person name="Srinivasan M.C."/>
            <person name="Vartak H.G."/>
        </authorList>
    </citation>
    <scope>PROTEIN SEQUENCE</scope>
</reference>
<accession>P19149</accession>
<comment type="function">
    <text>Involved in D-xylose catabolism.</text>
</comment>
<comment type="catalytic activity">
    <reaction>
        <text>alpha-D-xylose = alpha-D-xylulofuranose</text>
        <dbReference type="Rhea" id="RHEA:22816"/>
        <dbReference type="ChEBI" id="CHEBI:28518"/>
        <dbReference type="ChEBI" id="CHEBI:188998"/>
        <dbReference type="EC" id="5.3.1.5"/>
    </reaction>
</comment>
<comment type="cofactor">
    <cofactor evidence="1">
        <name>Mg(2+)</name>
        <dbReference type="ChEBI" id="CHEBI:18420"/>
    </cofactor>
    <text evidence="1">Binds 2 magnesium ions per subunit.</text>
</comment>
<comment type="subunit">
    <text>Homotetramer.</text>
</comment>
<comment type="subcellular location">
    <subcellularLocation>
        <location>Cytoplasm</location>
    </subcellularLocation>
</comment>
<comment type="similarity">
    <text evidence="1">Belongs to the xylose isomerase family.</text>
</comment>
<sequence>RHAGSAHTF</sequence>
<name>XYLA_STRS8</name>
<gene>
    <name type="primary">xylA</name>
</gene>
<dbReference type="EC" id="5.3.1.5"/>
<dbReference type="PIR" id="A31576">
    <property type="entry name" value="A31576"/>
</dbReference>
<dbReference type="GO" id="GO:0005737">
    <property type="term" value="C:cytoplasm"/>
    <property type="evidence" value="ECO:0007669"/>
    <property type="project" value="UniProtKB-SubCell"/>
</dbReference>
<dbReference type="GO" id="GO:0046872">
    <property type="term" value="F:metal ion binding"/>
    <property type="evidence" value="ECO:0007669"/>
    <property type="project" value="UniProtKB-KW"/>
</dbReference>
<dbReference type="GO" id="GO:0009045">
    <property type="term" value="F:xylose isomerase activity"/>
    <property type="evidence" value="ECO:0007669"/>
    <property type="project" value="UniProtKB-EC"/>
</dbReference>
<dbReference type="GO" id="GO:0042732">
    <property type="term" value="P:D-xylose metabolic process"/>
    <property type="evidence" value="ECO:0007669"/>
    <property type="project" value="UniProtKB-KW"/>
</dbReference>
<protein>
    <recommendedName>
        <fullName>Xylose isomerase</fullName>
        <ecNumber>5.3.1.5</ecNumber>
    </recommendedName>
</protein>
<keyword id="KW-0119">Carbohydrate metabolism</keyword>
<keyword id="KW-0963">Cytoplasm</keyword>
<keyword id="KW-0903">Direct protein sequencing</keyword>
<keyword id="KW-0413">Isomerase</keyword>
<keyword id="KW-0460">Magnesium</keyword>
<keyword id="KW-0479">Metal-binding</keyword>
<keyword id="KW-0859">Xylose metabolism</keyword>
<organism>
    <name type="scientific">Streptomyces sp. (strain NCL 82-5-1)</name>
    <dbReference type="NCBI Taxonomy" id="72593"/>
    <lineage>
        <taxon>Bacteria</taxon>
        <taxon>Bacillati</taxon>
        <taxon>Actinomycetota</taxon>
        <taxon>Actinomycetes</taxon>
        <taxon>Kitasatosporales</taxon>
        <taxon>Streptomycetaceae</taxon>
        <taxon>Streptomyces</taxon>
    </lineage>
</organism>